<reference key="1">
    <citation type="journal article" date="2016" name="Genome Announc.">
        <title>Complete genome sequence of Alkaliphilus metalliredigens strain QYMF, an alkaliphilic and metal-reducing bacterium isolated from borax-contaminated leachate ponds.</title>
        <authorList>
            <person name="Hwang C."/>
            <person name="Copeland A."/>
            <person name="Lucas S."/>
            <person name="Lapidus A."/>
            <person name="Barry K."/>
            <person name="Detter J.C."/>
            <person name="Glavina Del Rio T."/>
            <person name="Hammon N."/>
            <person name="Israni S."/>
            <person name="Dalin E."/>
            <person name="Tice H."/>
            <person name="Pitluck S."/>
            <person name="Chertkov O."/>
            <person name="Brettin T."/>
            <person name="Bruce D."/>
            <person name="Han C."/>
            <person name="Schmutz J."/>
            <person name="Larimer F."/>
            <person name="Land M.L."/>
            <person name="Hauser L."/>
            <person name="Kyrpides N."/>
            <person name="Mikhailova N."/>
            <person name="Ye Q."/>
            <person name="Zhou J."/>
            <person name="Richardson P."/>
            <person name="Fields M.W."/>
        </authorList>
    </citation>
    <scope>NUCLEOTIDE SEQUENCE [LARGE SCALE GENOMIC DNA]</scope>
    <source>
        <strain>QYMF</strain>
    </source>
</reference>
<comment type="function">
    <text evidence="1">Catalyzes the transfer of a dimethylallyl group onto the adenine at position 37 in tRNAs that read codons beginning with uridine, leading to the formation of N6-(dimethylallyl)adenosine (i(6)A).</text>
</comment>
<comment type="catalytic activity">
    <reaction evidence="1">
        <text>adenosine(37) in tRNA + dimethylallyl diphosphate = N(6)-dimethylallyladenosine(37) in tRNA + diphosphate</text>
        <dbReference type="Rhea" id="RHEA:26482"/>
        <dbReference type="Rhea" id="RHEA-COMP:10162"/>
        <dbReference type="Rhea" id="RHEA-COMP:10375"/>
        <dbReference type="ChEBI" id="CHEBI:33019"/>
        <dbReference type="ChEBI" id="CHEBI:57623"/>
        <dbReference type="ChEBI" id="CHEBI:74411"/>
        <dbReference type="ChEBI" id="CHEBI:74415"/>
        <dbReference type="EC" id="2.5.1.75"/>
    </reaction>
</comment>
<comment type="cofactor">
    <cofactor evidence="1">
        <name>Mg(2+)</name>
        <dbReference type="ChEBI" id="CHEBI:18420"/>
    </cofactor>
</comment>
<comment type="subunit">
    <text evidence="1">Monomer.</text>
</comment>
<comment type="similarity">
    <text evidence="1">Belongs to the IPP transferase family.</text>
</comment>
<proteinExistence type="inferred from homology"/>
<accession>A6TR77</accession>
<keyword id="KW-0067">ATP-binding</keyword>
<keyword id="KW-0460">Magnesium</keyword>
<keyword id="KW-0547">Nucleotide-binding</keyword>
<keyword id="KW-1185">Reference proteome</keyword>
<keyword id="KW-0808">Transferase</keyword>
<keyword id="KW-0819">tRNA processing</keyword>
<name>MIAA_ALKMQ</name>
<evidence type="ECO:0000255" key="1">
    <source>
        <dbReference type="HAMAP-Rule" id="MF_00185"/>
    </source>
</evidence>
<gene>
    <name evidence="1" type="primary">miaA</name>
    <name type="ordered locus">Amet_2542</name>
</gene>
<sequence length="312" mass="35859">MKKKILMLVGPTAVGKTETSIALCQRLKGEIISADSMQLYRHMNIGTAKPSLEEQQGIPHHLIDIIEPDASFTVADFQSEAARLIDAITKRNKFPIVAGGTGLYINSLLYDMDFTSAVSNWNLRQKLQKDAQLYGNEYVYKKLQDIDPNAATKIHPNNVKRVIRALEVNYESGENFGDFKNDIEKNTCYEPLLIGLTRDRSELYERINYRVDQMIETGLIEEVKNLLDCGYTPELIAFKGLGYKEIIAYLEGQYDLEEAITILKRDTRRYAKRQLTWFNRYQEIQWYNLTDQSSSNIIEAILKNVEGYFNLS</sequence>
<feature type="chain" id="PRO_1000077382" description="tRNA dimethylallyltransferase">
    <location>
        <begin position="1"/>
        <end position="312"/>
    </location>
</feature>
<feature type="region of interest" description="Interaction with substrate tRNA" evidence="1">
    <location>
        <begin position="35"/>
        <end position="38"/>
    </location>
</feature>
<feature type="binding site" evidence="1">
    <location>
        <begin position="10"/>
        <end position="17"/>
    </location>
    <ligand>
        <name>ATP</name>
        <dbReference type="ChEBI" id="CHEBI:30616"/>
    </ligand>
</feature>
<feature type="binding site" evidence="1">
    <location>
        <begin position="12"/>
        <end position="17"/>
    </location>
    <ligand>
        <name>substrate</name>
    </ligand>
</feature>
<feature type="site" description="Interaction with substrate tRNA" evidence="1">
    <location>
        <position position="101"/>
    </location>
</feature>
<feature type="site" description="Interaction with substrate tRNA" evidence="1">
    <location>
        <position position="124"/>
    </location>
</feature>
<dbReference type="EC" id="2.5.1.75" evidence="1"/>
<dbReference type="EMBL" id="CP000724">
    <property type="protein sequence ID" value="ABR48695.1"/>
    <property type="molecule type" value="Genomic_DNA"/>
</dbReference>
<dbReference type="RefSeq" id="WP_012063669.1">
    <property type="nucleotide sequence ID" value="NC_009633.1"/>
</dbReference>
<dbReference type="SMR" id="A6TR77"/>
<dbReference type="STRING" id="293826.Amet_2542"/>
<dbReference type="KEGG" id="amt:Amet_2542"/>
<dbReference type="eggNOG" id="COG0324">
    <property type="taxonomic scope" value="Bacteria"/>
</dbReference>
<dbReference type="HOGENOM" id="CLU_032616_0_1_9"/>
<dbReference type="OrthoDB" id="9776390at2"/>
<dbReference type="Proteomes" id="UP000001572">
    <property type="component" value="Chromosome"/>
</dbReference>
<dbReference type="GO" id="GO:0005524">
    <property type="term" value="F:ATP binding"/>
    <property type="evidence" value="ECO:0007669"/>
    <property type="project" value="UniProtKB-UniRule"/>
</dbReference>
<dbReference type="GO" id="GO:0052381">
    <property type="term" value="F:tRNA dimethylallyltransferase activity"/>
    <property type="evidence" value="ECO:0007669"/>
    <property type="project" value="UniProtKB-UniRule"/>
</dbReference>
<dbReference type="GO" id="GO:0006400">
    <property type="term" value="P:tRNA modification"/>
    <property type="evidence" value="ECO:0007669"/>
    <property type="project" value="TreeGrafter"/>
</dbReference>
<dbReference type="Gene3D" id="1.10.20.140">
    <property type="match status" value="1"/>
</dbReference>
<dbReference type="Gene3D" id="3.40.50.300">
    <property type="entry name" value="P-loop containing nucleotide triphosphate hydrolases"/>
    <property type="match status" value="1"/>
</dbReference>
<dbReference type="HAMAP" id="MF_00185">
    <property type="entry name" value="IPP_trans"/>
    <property type="match status" value="1"/>
</dbReference>
<dbReference type="InterPro" id="IPR039657">
    <property type="entry name" value="Dimethylallyltransferase"/>
</dbReference>
<dbReference type="InterPro" id="IPR018022">
    <property type="entry name" value="IPT"/>
</dbReference>
<dbReference type="InterPro" id="IPR027417">
    <property type="entry name" value="P-loop_NTPase"/>
</dbReference>
<dbReference type="NCBIfam" id="TIGR00174">
    <property type="entry name" value="miaA"/>
    <property type="match status" value="1"/>
</dbReference>
<dbReference type="PANTHER" id="PTHR11088">
    <property type="entry name" value="TRNA DIMETHYLALLYLTRANSFERASE"/>
    <property type="match status" value="1"/>
</dbReference>
<dbReference type="PANTHER" id="PTHR11088:SF60">
    <property type="entry name" value="TRNA DIMETHYLALLYLTRANSFERASE"/>
    <property type="match status" value="1"/>
</dbReference>
<dbReference type="Pfam" id="PF01715">
    <property type="entry name" value="IPPT"/>
    <property type="match status" value="1"/>
</dbReference>
<dbReference type="SUPFAM" id="SSF52540">
    <property type="entry name" value="P-loop containing nucleoside triphosphate hydrolases"/>
    <property type="match status" value="1"/>
</dbReference>
<organism>
    <name type="scientific">Alkaliphilus metalliredigens (strain QYMF)</name>
    <dbReference type="NCBI Taxonomy" id="293826"/>
    <lineage>
        <taxon>Bacteria</taxon>
        <taxon>Bacillati</taxon>
        <taxon>Bacillota</taxon>
        <taxon>Clostridia</taxon>
        <taxon>Peptostreptococcales</taxon>
        <taxon>Natronincolaceae</taxon>
        <taxon>Alkaliphilus</taxon>
    </lineage>
</organism>
<protein>
    <recommendedName>
        <fullName evidence="1">tRNA dimethylallyltransferase</fullName>
        <ecNumber evidence="1">2.5.1.75</ecNumber>
    </recommendedName>
    <alternativeName>
        <fullName evidence="1">Dimethylallyl diphosphate:tRNA dimethylallyltransferase</fullName>
        <shortName evidence="1">DMAPP:tRNA dimethylallyltransferase</shortName>
        <shortName evidence="1">DMATase</shortName>
    </alternativeName>
    <alternativeName>
        <fullName evidence="1">Isopentenyl-diphosphate:tRNA isopentenyltransferase</fullName>
        <shortName evidence="1">IPP transferase</shortName>
        <shortName evidence="1">IPPT</shortName>
        <shortName evidence="1">IPTase</shortName>
    </alternativeName>
</protein>